<dbReference type="EC" id="7.1.1.-" evidence="1"/>
<dbReference type="EMBL" id="AP008955">
    <property type="protein sequence ID" value="BAH46415.1"/>
    <property type="molecule type" value="Genomic_DNA"/>
</dbReference>
<dbReference type="RefSeq" id="WP_015893610.1">
    <property type="nucleotide sequence ID" value="NC_012491.1"/>
</dbReference>
<dbReference type="SMR" id="C0Z766"/>
<dbReference type="STRING" id="358681.BBR47_54380"/>
<dbReference type="KEGG" id="bbe:BBR47_54380"/>
<dbReference type="eggNOG" id="COG0713">
    <property type="taxonomic scope" value="Bacteria"/>
</dbReference>
<dbReference type="HOGENOM" id="CLU_144724_1_1_9"/>
<dbReference type="Proteomes" id="UP000001877">
    <property type="component" value="Chromosome"/>
</dbReference>
<dbReference type="GO" id="GO:0030964">
    <property type="term" value="C:NADH dehydrogenase complex"/>
    <property type="evidence" value="ECO:0007669"/>
    <property type="project" value="TreeGrafter"/>
</dbReference>
<dbReference type="GO" id="GO:0005886">
    <property type="term" value="C:plasma membrane"/>
    <property type="evidence" value="ECO:0007669"/>
    <property type="project" value="UniProtKB-SubCell"/>
</dbReference>
<dbReference type="GO" id="GO:0050136">
    <property type="term" value="F:NADH:ubiquinone reductase (non-electrogenic) activity"/>
    <property type="evidence" value="ECO:0007669"/>
    <property type="project" value="UniProtKB-UniRule"/>
</dbReference>
<dbReference type="GO" id="GO:0048038">
    <property type="term" value="F:quinone binding"/>
    <property type="evidence" value="ECO:0007669"/>
    <property type="project" value="UniProtKB-KW"/>
</dbReference>
<dbReference type="GO" id="GO:0042773">
    <property type="term" value="P:ATP synthesis coupled electron transport"/>
    <property type="evidence" value="ECO:0007669"/>
    <property type="project" value="InterPro"/>
</dbReference>
<dbReference type="FunFam" id="1.10.287.3510:FF:000001">
    <property type="entry name" value="NADH-quinone oxidoreductase subunit K"/>
    <property type="match status" value="1"/>
</dbReference>
<dbReference type="Gene3D" id="1.10.287.3510">
    <property type="match status" value="1"/>
</dbReference>
<dbReference type="HAMAP" id="MF_01456">
    <property type="entry name" value="NDH1_NuoK"/>
    <property type="match status" value="1"/>
</dbReference>
<dbReference type="InterPro" id="IPR001133">
    <property type="entry name" value="NADH_UbQ_OxRdtase_chain4L/K"/>
</dbReference>
<dbReference type="InterPro" id="IPR039428">
    <property type="entry name" value="NUOK/Mnh_C1-like"/>
</dbReference>
<dbReference type="NCBIfam" id="NF004320">
    <property type="entry name" value="PRK05715.1-2"/>
    <property type="match status" value="1"/>
</dbReference>
<dbReference type="NCBIfam" id="NF004321">
    <property type="entry name" value="PRK05715.1-3"/>
    <property type="match status" value="1"/>
</dbReference>
<dbReference type="NCBIfam" id="NF004322">
    <property type="entry name" value="PRK05715.1-4"/>
    <property type="match status" value="1"/>
</dbReference>
<dbReference type="NCBIfam" id="NF004323">
    <property type="entry name" value="PRK05715.1-5"/>
    <property type="match status" value="1"/>
</dbReference>
<dbReference type="PANTHER" id="PTHR11434:SF16">
    <property type="entry name" value="NADH-UBIQUINONE OXIDOREDUCTASE CHAIN 4L"/>
    <property type="match status" value="1"/>
</dbReference>
<dbReference type="PANTHER" id="PTHR11434">
    <property type="entry name" value="NADH-UBIQUINONE OXIDOREDUCTASE SUBUNIT ND4L"/>
    <property type="match status" value="1"/>
</dbReference>
<dbReference type="Pfam" id="PF00420">
    <property type="entry name" value="Oxidored_q2"/>
    <property type="match status" value="1"/>
</dbReference>
<sequence>MTVSISSYLMVALILFCVGLYGALTKRNAVVVLLSIELMLNAVNINLVAFSKFGLYPSVTGQIFTLFTMTVAAAEVAVGLAILIALYRNKETVNVDEMNQMKR</sequence>
<evidence type="ECO:0000255" key="1">
    <source>
        <dbReference type="HAMAP-Rule" id="MF_01456"/>
    </source>
</evidence>
<reference key="1">
    <citation type="submission" date="2005-03" db="EMBL/GenBank/DDBJ databases">
        <title>Brevibacillus brevis strain 47, complete genome.</title>
        <authorList>
            <person name="Hosoyama A."/>
            <person name="Yamada R."/>
            <person name="Hongo Y."/>
            <person name="Terui Y."/>
            <person name="Ankai A."/>
            <person name="Masuyama W."/>
            <person name="Sekiguchi M."/>
            <person name="Takeda T."/>
            <person name="Asano K."/>
            <person name="Ohji S."/>
            <person name="Ichikawa N."/>
            <person name="Narita S."/>
            <person name="Aoki N."/>
            <person name="Miura H."/>
            <person name="Matsushita S."/>
            <person name="Sekigawa T."/>
            <person name="Yamagata H."/>
            <person name="Yoshikawa H."/>
            <person name="Udaka S."/>
            <person name="Tanikawa S."/>
            <person name="Fujita N."/>
        </authorList>
    </citation>
    <scope>NUCLEOTIDE SEQUENCE [LARGE SCALE GENOMIC DNA]</scope>
    <source>
        <strain>47 / JCM 6285 / NBRC 100599</strain>
    </source>
</reference>
<keyword id="KW-1003">Cell membrane</keyword>
<keyword id="KW-0472">Membrane</keyword>
<keyword id="KW-0520">NAD</keyword>
<keyword id="KW-0874">Quinone</keyword>
<keyword id="KW-1185">Reference proteome</keyword>
<keyword id="KW-1278">Translocase</keyword>
<keyword id="KW-0812">Transmembrane</keyword>
<keyword id="KW-1133">Transmembrane helix</keyword>
<keyword id="KW-0813">Transport</keyword>
<feature type="chain" id="PRO_0000389969" description="NADH-quinone oxidoreductase subunit K">
    <location>
        <begin position="1"/>
        <end position="103"/>
    </location>
</feature>
<feature type="transmembrane region" description="Helical" evidence="1">
    <location>
        <begin position="5"/>
        <end position="25"/>
    </location>
</feature>
<feature type="transmembrane region" description="Helical" evidence="1">
    <location>
        <begin position="30"/>
        <end position="50"/>
    </location>
</feature>
<feature type="transmembrane region" description="Helical" evidence="1">
    <location>
        <begin position="66"/>
        <end position="86"/>
    </location>
</feature>
<organism>
    <name type="scientific">Brevibacillus brevis (strain 47 / JCM 6285 / NBRC 100599)</name>
    <dbReference type="NCBI Taxonomy" id="358681"/>
    <lineage>
        <taxon>Bacteria</taxon>
        <taxon>Bacillati</taxon>
        <taxon>Bacillota</taxon>
        <taxon>Bacilli</taxon>
        <taxon>Bacillales</taxon>
        <taxon>Paenibacillaceae</taxon>
        <taxon>Brevibacillus</taxon>
    </lineage>
</organism>
<proteinExistence type="inferred from homology"/>
<comment type="function">
    <text evidence="1">NDH-1 shuttles electrons from NADH, via FMN and iron-sulfur (Fe-S) centers, to quinones in the respiratory chain. The immediate electron acceptor for the enzyme in this species is believed to be a menaquinone. Couples the redox reaction to proton translocation (for every two electrons transferred, four hydrogen ions are translocated across the cytoplasmic membrane), and thus conserves the redox energy in a proton gradient.</text>
</comment>
<comment type="catalytic activity">
    <reaction evidence="1">
        <text>a quinone + NADH + 5 H(+)(in) = a quinol + NAD(+) + 4 H(+)(out)</text>
        <dbReference type="Rhea" id="RHEA:57888"/>
        <dbReference type="ChEBI" id="CHEBI:15378"/>
        <dbReference type="ChEBI" id="CHEBI:24646"/>
        <dbReference type="ChEBI" id="CHEBI:57540"/>
        <dbReference type="ChEBI" id="CHEBI:57945"/>
        <dbReference type="ChEBI" id="CHEBI:132124"/>
    </reaction>
</comment>
<comment type="subunit">
    <text evidence="1">NDH-1 is composed of 14 different subunits. Subunits NuoA, H, J, K, L, M, N constitute the membrane sector of the complex.</text>
</comment>
<comment type="subcellular location">
    <subcellularLocation>
        <location evidence="1">Cell membrane</location>
        <topology evidence="1">Multi-pass membrane protein</topology>
    </subcellularLocation>
</comment>
<comment type="similarity">
    <text evidence="1">Belongs to the complex I subunit 4L family.</text>
</comment>
<name>NUOK_BREBN</name>
<protein>
    <recommendedName>
        <fullName evidence="1">NADH-quinone oxidoreductase subunit K</fullName>
        <ecNumber evidence="1">7.1.1.-</ecNumber>
    </recommendedName>
    <alternativeName>
        <fullName evidence="1">NADH dehydrogenase I subunit K</fullName>
    </alternativeName>
    <alternativeName>
        <fullName evidence="1">NDH-1 subunit K</fullName>
    </alternativeName>
</protein>
<accession>C0Z766</accession>
<gene>
    <name evidence="1" type="primary">nuoK</name>
    <name type="ordered locus">BBR47_54380</name>
</gene>